<organism>
    <name type="scientific">Trieres chinensis</name>
    <name type="common">Marine centric diatom</name>
    <name type="synonym">Odontella sinensis</name>
    <dbReference type="NCBI Taxonomy" id="1514140"/>
    <lineage>
        <taxon>Eukaryota</taxon>
        <taxon>Sar</taxon>
        <taxon>Stramenopiles</taxon>
        <taxon>Ochrophyta</taxon>
        <taxon>Bacillariophyta</taxon>
        <taxon>Mediophyceae</taxon>
        <taxon>Biddulphiophycidae</taxon>
        <taxon>Eupodiscales</taxon>
        <taxon>Parodontellaceae</taxon>
        <taxon>Trieres</taxon>
    </lineage>
</organism>
<sequence>MQKEIRRDDIIGSRRFSNYFWAVFLCSGGISFLLAGISSYFKINFLPFANPKELAFIPQGLVMSFYGTLSIALAIYILGTLFWDIGSGYNEYNKVENLVKIVRKGFPGKNREILLTYPLTNIRAIGIKISEGLNPKRSIYLCLKDERQIPLTPVQQPNSISNLEEEAAELAKFLDLKLENL</sequence>
<reference key="1">
    <citation type="journal article" date="1995" name="Plant Mol. Biol. Rep.">
        <title>The chloroplast genome of a chlorophyll a+c-containing alga, Odontella sinensis.</title>
        <authorList>
            <person name="Kowallik K.V."/>
            <person name="Stoebe B."/>
            <person name="Schaffran I."/>
            <person name="Kroth-Pancic P."/>
            <person name="Freier U."/>
        </authorList>
    </citation>
    <scope>NUCLEOTIDE SEQUENCE [LARGE SCALE GENOMIC DNA]</scope>
</reference>
<feature type="chain" id="PRO_0000217616" description="Photosystem I assembly protein Ycf4">
    <location>
        <begin position="1"/>
        <end position="181"/>
    </location>
</feature>
<feature type="transmembrane region" description="Helical" evidence="1">
    <location>
        <begin position="19"/>
        <end position="41"/>
    </location>
</feature>
<feature type="transmembrane region" description="Helical" evidence="1">
    <location>
        <begin position="61"/>
        <end position="83"/>
    </location>
</feature>
<dbReference type="EMBL" id="Z67753">
    <property type="protein sequence ID" value="CAA91709.1"/>
    <property type="molecule type" value="Genomic_DNA"/>
</dbReference>
<dbReference type="PIR" id="S78336">
    <property type="entry name" value="S78336"/>
</dbReference>
<dbReference type="RefSeq" id="NP_043677.1">
    <property type="nucleotide sequence ID" value="NC_001713.1"/>
</dbReference>
<dbReference type="SMR" id="P49526"/>
<dbReference type="GeneID" id="801702"/>
<dbReference type="GO" id="GO:0009535">
    <property type="term" value="C:chloroplast thylakoid membrane"/>
    <property type="evidence" value="ECO:0007669"/>
    <property type="project" value="UniProtKB-SubCell"/>
</dbReference>
<dbReference type="GO" id="GO:0009522">
    <property type="term" value="C:photosystem I"/>
    <property type="evidence" value="ECO:0007669"/>
    <property type="project" value="InterPro"/>
</dbReference>
<dbReference type="GO" id="GO:0015979">
    <property type="term" value="P:photosynthesis"/>
    <property type="evidence" value="ECO:0007669"/>
    <property type="project" value="UniProtKB-UniRule"/>
</dbReference>
<dbReference type="HAMAP" id="MF_00437">
    <property type="entry name" value="Ycf4"/>
    <property type="match status" value="1"/>
</dbReference>
<dbReference type="InterPro" id="IPR003359">
    <property type="entry name" value="PSI_Ycf4_assembly"/>
</dbReference>
<dbReference type="NCBIfam" id="NF002712">
    <property type="entry name" value="PRK02542.1"/>
    <property type="match status" value="1"/>
</dbReference>
<dbReference type="PANTHER" id="PTHR33288">
    <property type="match status" value="1"/>
</dbReference>
<dbReference type="PANTHER" id="PTHR33288:SF4">
    <property type="entry name" value="PHOTOSYSTEM I ASSEMBLY PROTEIN YCF4"/>
    <property type="match status" value="1"/>
</dbReference>
<dbReference type="Pfam" id="PF02392">
    <property type="entry name" value="Ycf4"/>
    <property type="match status" value="1"/>
</dbReference>
<comment type="function">
    <text evidence="1">Seems to be required for the assembly of the photosystem I complex.</text>
</comment>
<comment type="subcellular location">
    <subcellularLocation>
        <location evidence="1">Plastid</location>
        <location evidence="1">Chloroplast thylakoid membrane</location>
        <topology evidence="1">Multi-pass membrane protein</topology>
    </subcellularLocation>
</comment>
<comment type="similarity">
    <text evidence="1">Belongs to the Ycf4 family.</text>
</comment>
<name>YCF4_TRICV</name>
<evidence type="ECO:0000255" key="1">
    <source>
        <dbReference type="HAMAP-Rule" id="MF_00437"/>
    </source>
</evidence>
<protein>
    <recommendedName>
        <fullName evidence="1">Photosystem I assembly protein Ycf4</fullName>
    </recommendedName>
</protein>
<proteinExistence type="inferred from homology"/>
<gene>
    <name evidence="1" type="primary">ycf4</name>
</gene>
<accession>P49526</accession>
<geneLocation type="chloroplast"/>
<keyword id="KW-0150">Chloroplast</keyword>
<keyword id="KW-0472">Membrane</keyword>
<keyword id="KW-0602">Photosynthesis</keyword>
<keyword id="KW-0934">Plastid</keyword>
<keyword id="KW-0793">Thylakoid</keyword>
<keyword id="KW-0812">Transmembrane</keyword>
<keyword id="KW-1133">Transmembrane helix</keyword>